<sequence>MNKGHVIQVMGPVVDVKFDNGQLPAIYNSLTVKIERPNEEPTILALEVALHLGDDSVRTIAMSSTDGLQRGAEVTDSGKAISVPVGEVTLGRVFNVLGEVIDLGEEIPADARRDSIHREAPTFEELSTTVEILETGIKVVDLLAPYIKGGKIGLFGGAGVGKTVLIQELINNIAQEHSGISVFAGVGERTREGNDLFFEMSDSGVIKQTAMVFGQMNEPPGARMRVALTGLTMAEYFRDEQGADVLLFIDNIFRFTQAGSEVSALLGRMPSAVGYQPTLATEMGKLQERITSTNKGSVTSIQAIYVPADDYTDPAPATTFAHLDATTNLERKLSEMGIYPAVDPLASTSRALSPEIVGAEHYAVATGVQRTIQRYRELQDIIAILGMDELSDEDKQTVERARRIQFFLSQNFHVAEQFTGQKGSYVPVKETVRSFKEILDGKWDHLPEDAFRLVGSIDEVVEKAKSMGVEV</sequence>
<feature type="chain" id="PRO_1000143523" description="ATP synthase subunit beta">
    <location>
        <begin position="1"/>
        <end position="471"/>
    </location>
</feature>
<feature type="binding site" evidence="1">
    <location>
        <begin position="156"/>
        <end position="163"/>
    </location>
    <ligand>
        <name>ATP</name>
        <dbReference type="ChEBI" id="CHEBI:30616"/>
    </ligand>
</feature>
<comment type="function">
    <text evidence="1">Produces ATP from ADP in the presence of a proton gradient across the membrane. The catalytic sites are hosted primarily by the beta subunits.</text>
</comment>
<comment type="catalytic activity">
    <reaction evidence="1">
        <text>ATP + H2O + 4 H(+)(in) = ADP + phosphate + 5 H(+)(out)</text>
        <dbReference type="Rhea" id="RHEA:57720"/>
        <dbReference type="ChEBI" id="CHEBI:15377"/>
        <dbReference type="ChEBI" id="CHEBI:15378"/>
        <dbReference type="ChEBI" id="CHEBI:30616"/>
        <dbReference type="ChEBI" id="CHEBI:43474"/>
        <dbReference type="ChEBI" id="CHEBI:456216"/>
        <dbReference type="EC" id="7.1.2.2"/>
    </reaction>
</comment>
<comment type="subunit">
    <text evidence="1">F-type ATPases have 2 components, CF(1) - the catalytic core - and CF(0) - the membrane proton channel. CF(1) has five subunits: alpha(3), beta(3), gamma(1), delta(1), epsilon(1). CF(0) has three main subunits: a(1), b(2) and c(9-12). The alpha and beta chains form an alternating ring which encloses part of the gamma chain. CF(1) is attached to CF(0) by a central stalk formed by the gamma and epsilon chains, while a peripheral stalk is formed by the delta and b chains.</text>
</comment>
<comment type="subcellular location">
    <subcellularLocation>
        <location evidence="1">Cell membrane</location>
        <topology evidence="1">Peripheral membrane protein</topology>
    </subcellularLocation>
</comment>
<comment type="similarity">
    <text evidence="1">Belongs to the ATPase alpha/beta chains family.</text>
</comment>
<keyword id="KW-0066">ATP synthesis</keyword>
<keyword id="KW-0067">ATP-binding</keyword>
<keyword id="KW-1003">Cell membrane</keyword>
<keyword id="KW-0139">CF(1)</keyword>
<keyword id="KW-0375">Hydrogen ion transport</keyword>
<keyword id="KW-0406">Ion transport</keyword>
<keyword id="KW-0472">Membrane</keyword>
<keyword id="KW-0547">Nucleotide-binding</keyword>
<keyword id="KW-1278">Translocase</keyword>
<keyword id="KW-0813">Transport</keyword>
<name>ATPB_LYSSC</name>
<evidence type="ECO:0000255" key="1">
    <source>
        <dbReference type="HAMAP-Rule" id="MF_01347"/>
    </source>
</evidence>
<reference key="1">
    <citation type="journal article" date="2008" name="J. Bacteriol.">
        <title>Complete genome sequence of the mosquitocidal bacterium Bacillus sphaericus C3-41 and comparison with those of closely related Bacillus species.</title>
        <authorList>
            <person name="Hu X."/>
            <person name="Fan W."/>
            <person name="Han B."/>
            <person name="Liu H."/>
            <person name="Zheng D."/>
            <person name="Li Q."/>
            <person name="Dong W."/>
            <person name="Yan J."/>
            <person name="Gao M."/>
            <person name="Berry C."/>
            <person name="Yuan Z."/>
        </authorList>
    </citation>
    <scope>NUCLEOTIDE SEQUENCE [LARGE SCALE GENOMIC DNA]</scope>
    <source>
        <strain>C3-41</strain>
    </source>
</reference>
<dbReference type="EC" id="7.1.2.2" evidence="1"/>
<dbReference type="EMBL" id="CP000817">
    <property type="protein sequence ID" value="ACA38628.1"/>
    <property type="molecule type" value="Genomic_DNA"/>
</dbReference>
<dbReference type="RefSeq" id="WP_012292768.1">
    <property type="nucleotide sequence ID" value="NC_010382.1"/>
</dbReference>
<dbReference type="SMR" id="B1HM56"/>
<dbReference type="EnsemblBacteria" id="ACA38628">
    <property type="protein sequence ID" value="ACA38628"/>
    <property type="gene ID" value="Bsph_1016"/>
</dbReference>
<dbReference type="KEGG" id="lsp:Bsph_1016"/>
<dbReference type="HOGENOM" id="CLU_022398_0_2_9"/>
<dbReference type="Proteomes" id="UP000002164">
    <property type="component" value="Chromosome"/>
</dbReference>
<dbReference type="GO" id="GO:0005886">
    <property type="term" value="C:plasma membrane"/>
    <property type="evidence" value="ECO:0007669"/>
    <property type="project" value="UniProtKB-SubCell"/>
</dbReference>
<dbReference type="GO" id="GO:0045259">
    <property type="term" value="C:proton-transporting ATP synthase complex"/>
    <property type="evidence" value="ECO:0007669"/>
    <property type="project" value="UniProtKB-KW"/>
</dbReference>
<dbReference type="GO" id="GO:0005524">
    <property type="term" value="F:ATP binding"/>
    <property type="evidence" value="ECO:0007669"/>
    <property type="project" value="UniProtKB-UniRule"/>
</dbReference>
<dbReference type="GO" id="GO:0016887">
    <property type="term" value="F:ATP hydrolysis activity"/>
    <property type="evidence" value="ECO:0007669"/>
    <property type="project" value="InterPro"/>
</dbReference>
<dbReference type="GO" id="GO:0046933">
    <property type="term" value="F:proton-transporting ATP synthase activity, rotational mechanism"/>
    <property type="evidence" value="ECO:0007669"/>
    <property type="project" value="UniProtKB-UniRule"/>
</dbReference>
<dbReference type="CDD" id="cd18110">
    <property type="entry name" value="ATP-synt_F1_beta_C"/>
    <property type="match status" value="1"/>
</dbReference>
<dbReference type="CDD" id="cd18115">
    <property type="entry name" value="ATP-synt_F1_beta_N"/>
    <property type="match status" value="1"/>
</dbReference>
<dbReference type="CDD" id="cd01133">
    <property type="entry name" value="F1-ATPase_beta_CD"/>
    <property type="match status" value="1"/>
</dbReference>
<dbReference type="FunFam" id="1.10.1140.10:FF:000001">
    <property type="entry name" value="ATP synthase subunit beta"/>
    <property type="match status" value="1"/>
</dbReference>
<dbReference type="FunFam" id="2.40.10.170:FF:000005">
    <property type="entry name" value="ATP synthase subunit beta"/>
    <property type="match status" value="1"/>
</dbReference>
<dbReference type="FunFam" id="3.40.50.300:FF:000004">
    <property type="entry name" value="ATP synthase subunit beta"/>
    <property type="match status" value="1"/>
</dbReference>
<dbReference type="Gene3D" id="2.40.10.170">
    <property type="match status" value="1"/>
</dbReference>
<dbReference type="Gene3D" id="1.10.1140.10">
    <property type="entry name" value="Bovine Mitochondrial F1-atpase, Atp Synthase Beta Chain, Chain D, domain 3"/>
    <property type="match status" value="1"/>
</dbReference>
<dbReference type="Gene3D" id="3.40.50.300">
    <property type="entry name" value="P-loop containing nucleotide triphosphate hydrolases"/>
    <property type="match status" value="1"/>
</dbReference>
<dbReference type="HAMAP" id="MF_01347">
    <property type="entry name" value="ATP_synth_beta_bact"/>
    <property type="match status" value="1"/>
</dbReference>
<dbReference type="InterPro" id="IPR003593">
    <property type="entry name" value="AAA+_ATPase"/>
</dbReference>
<dbReference type="InterPro" id="IPR055190">
    <property type="entry name" value="ATP-synt_VA_C"/>
</dbReference>
<dbReference type="InterPro" id="IPR005722">
    <property type="entry name" value="ATP_synth_F1_bsu"/>
</dbReference>
<dbReference type="InterPro" id="IPR020003">
    <property type="entry name" value="ATPase_a/bsu_AS"/>
</dbReference>
<dbReference type="InterPro" id="IPR050053">
    <property type="entry name" value="ATPase_alpha/beta_chains"/>
</dbReference>
<dbReference type="InterPro" id="IPR004100">
    <property type="entry name" value="ATPase_F1/V1/A1_a/bsu_N"/>
</dbReference>
<dbReference type="InterPro" id="IPR036121">
    <property type="entry name" value="ATPase_F1/V1/A1_a/bsu_N_sf"/>
</dbReference>
<dbReference type="InterPro" id="IPR000194">
    <property type="entry name" value="ATPase_F1/V1/A1_a/bsu_nucl-bd"/>
</dbReference>
<dbReference type="InterPro" id="IPR024034">
    <property type="entry name" value="ATPase_F1/V1_b/a_C"/>
</dbReference>
<dbReference type="InterPro" id="IPR027417">
    <property type="entry name" value="P-loop_NTPase"/>
</dbReference>
<dbReference type="NCBIfam" id="TIGR01039">
    <property type="entry name" value="atpD"/>
    <property type="match status" value="1"/>
</dbReference>
<dbReference type="PANTHER" id="PTHR15184">
    <property type="entry name" value="ATP SYNTHASE"/>
    <property type="match status" value="1"/>
</dbReference>
<dbReference type="PANTHER" id="PTHR15184:SF71">
    <property type="entry name" value="ATP SYNTHASE SUBUNIT BETA, MITOCHONDRIAL"/>
    <property type="match status" value="1"/>
</dbReference>
<dbReference type="Pfam" id="PF00006">
    <property type="entry name" value="ATP-synt_ab"/>
    <property type="match status" value="1"/>
</dbReference>
<dbReference type="Pfam" id="PF02874">
    <property type="entry name" value="ATP-synt_ab_N"/>
    <property type="match status" value="1"/>
</dbReference>
<dbReference type="Pfam" id="PF22919">
    <property type="entry name" value="ATP-synt_VA_C"/>
    <property type="match status" value="1"/>
</dbReference>
<dbReference type="SMART" id="SM00382">
    <property type="entry name" value="AAA"/>
    <property type="match status" value="1"/>
</dbReference>
<dbReference type="SUPFAM" id="SSF47917">
    <property type="entry name" value="C-terminal domain of alpha and beta subunits of F1 ATP synthase"/>
    <property type="match status" value="1"/>
</dbReference>
<dbReference type="SUPFAM" id="SSF50615">
    <property type="entry name" value="N-terminal domain of alpha and beta subunits of F1 ATP synthase"/>
    <property type="match status" value="1"/>
</dbReference>
<dbReference type="SUPFAM" id="SSF52540">
    <property type="entry name" value="P-loop containing nucleoside triphosphate hydrolases"/>
    <property type="match status" value="1"/>
</dbReference>
<dbReference type="PROSITE" id="PS00152">
    <property type="entry name" value="ATPASE_ALPHA_BETA"/>
    <property type="match status" value="1"/>
</dbReference>
<accession>B1HM56</accession>
<proteinExistence type="inferred from homology"/>
<organism>
    <name type="scientific">Lysinibacillus sphaericus (strain C3-41)</name>
    <dbReference type="NCBI Taxonomy" id="444177"/>
    <lineage>
        <taxon>Bacteria</taxon>
        <taxon>Bacillati</taxon>
        <taxon>Bacillota</taxon>
        <taxon>Bacilli</taxon>
        <taxon>Bacillales</taxon>
        <taxon>Bacillaceae</taxon>
        <taxon>Lysinibacillus</taxon>
    </lineage>
</organism>
<gene>
    <name evidence="1" type="primary">atpD</name>
    <name type="ordered locus">Bsph_1016</name>
</gene>
<protein>
    <recommendedName>
        <fullName evidence="1">ATP synthase subunit beta</fullName>
        <ecNumber evidence="1">7.1.2.2</ecNumber>
    </recommendedName>
    <alternativeName>
        <fullName evidence="1">ATP synthase F1 sector subunit beta</fullName>
    </alternativeName>
    <alternativeName>
        <fullName evidence="1">F-ATPase subunit beta</fullName>
    </alternativeName>
</protein>